<comment type="function">
    <text evidence="1">One of the proteins required for the normal export of preproteins out of the cell cytoplasm. It is a molecular chaperone that binds to a subset of precursor proteins, maintaining them in a translocation-competent state. It also specifically binds to its receptor SecA.</text>
</comment>
<comment type="subunit">
    <text evidence="1">Homotetramer, a dimer of dimers. One homotetramer interacts with 1 SecA dimer.</text>
</comment>
<comment type="subcellular location">
    <subcellularLocation>
        <location evidence="1">Cytoplasm</location>
    </subcellularLocation>
</comment>
<comment type="similarity">
    <text evidence="1">Belongs to the SecB family.</text>
</comment>
<protein>
    <recommendedName>
        <fullName evidence="1">Protein-export protein SecB</fullName>
    </recommendedName>
</protein>
<reference key="1">
    <citation type="journal article" date="2004" name="Nucleic Acids Res.">
        <title>Unique features revealed by the genome sequence of Acinetobacter sp. ADP1, a versatile and naturally transformation competent bacterium.</title>
        <authorList>
            <person name="Barbe V."/>
            <person name="Vallenet D."/>
            <person name="Fonknechten N."/>
            <person name="Kreimeyer A."/>
            <person name="Oztas S."/>
            <person name="Labarre L."/>
            <person name="Cruveiller S."/>
            <person name="Robert C."/>
            <person name="Duprat S."/>
            <person name="Wincker P."/>
            <person name="Ornston L.N."/>
            <person name="Weissenbach J."/>
            <person name="Marliere P."/>
            <person name="Cohen G.N."/>
            <person name="Medigue C."/>
        </authorList>
    </citation>
    <scope>NUCLEOTIDE SEQUENCE [LARGE SCALE GENOMIC DNA]</scope>
    <source>
        <strain>ATCC 33305 / BD413 / ADP1</strain>
    </source>
</reference>
<accession>Q6F801</accession>
<keyword id="KW-0143">Chaperone</keyword>
<keyword id="KW-0963">Cytoplasm</keyword>
<keyword id="KW-0653">Protein transport</keyword>
<keyword id="KW-0811">Translocation</keyword>
<keyword id="KW-0813">Transport</keyword>
<proteinExistence type="inferred from homology"/>
<name>SECB_ACIAD</name>
<dbReference type="EMBL" id="CR543861">
    <property type="protein sequence ID" value="CAG69814.1"/>
    <property type="molecule type" value="Genomic_DNA"/>
</dbReference>
<dbReference type="RefSeq" id="WP_004924350.1">
    <property type="nucleotide sequence ID" value="NC_005966.1"/>
</dbReference>
<dbReference type="SMR" id="Q6F801"/>
<dbReference type="STRING" id="202950.GCA_001485005_02774"/>
<dbReference type="GeneID" id="45235336"/>
<dbReference type="KEGG" id="aci:ACIAD3122"/>
<dbReference type="eggNOG" id="COG1952">
    <property type="taxonomic scope" value="Bacteria"/>
</dbReference>
<dbReference type="HOGENOM" id="CLU_111574_1_0_6"/>
<dbReference type="OrthoDB" id="9795145at2"/>
<dbReference type="BioCyc" id="ASP62977:ACIAD_RS14105-MONOMER"/>
<dbReference type="Proteomes" id="UP000000430">
    <property type="component" value="Chromosome"/>
</dbReference>
<dbReference type="GO" id="GO:0005737">
    <property type="term" value="C:cytoplasm"/>
    <property type="evidence" value="ECO:0007669"/>
    <property type="project" value="UniProtKB-SubCell"/>
</dbReference>
<dbReference type="GO" id="GO:0051082">
    <property type="term" value="F:unfolded protein binding"/>
    <property type="evidence" value="ECO:0007669"/>
    <property type="project" value="InterPro"/>
</dbReference>
<dbReference type="GO" id="GO:0006457">
    <property type="term" value="P:protein folding"/>
    <property type="evidence" value="ECO:0007669"/>
    <property type="project" value="UniProtKB-UniRule"/>
</dbReference>
<dbReference type="GO" id="GO:0051262">
    <property type="term" value="P:protein tetramerization"/>
    <property type="evidence" value="ECO:0007669"/>
    <property type="project" value="InterPro"/>
</dbReference>
<dbReference type="GO" id="GO:0015031">
    <property type="term" value="P:protein transport"/>
    <property type="evidence" value="ECO:0007669"/>
    <property type="project" value="UniProtKB-UniRule"/>
</dbReference>
<dbReference type="Gene3D" id="3.10.420.10">
    <property type="entry name" value="SecB-like"/>
    <property type="match status" value="1"/>
</dbReference>
<dbReference type="HAMAP" id="MF_00821">
    <property type="entry name" value="SecB"/>
    <property type="match status" value="1"/>
</dbReference>
<dbReference type="InterPro" id="IPR003708">
    <property type="entry name" value="SecB"/>
</dbReference>
<dbReference type="InterPro" id="IPR035958">
    <property type="entry name" value="SecB-like_sf"/>
</dbReference>
<dbReference type="NCBIfam" id="NF004393">
    <property type="entry name" value="PRK05751.1-4"/>
    <property type="match status" value="1"/>
</dbReference>
<dbReference type="NCBIfam" id="TIGR00809">
    <property type="entry name" value="secB"/>
    <property type="match status" value="1"/>
</dbReference>
<dbReference type="PANTHER" id="PTHR36918">
    <property type="match status" value="1"/>
</dbReference>
<dbReference type="PANTHER" id="PTHR36918:SF1">
    <property type="entry name" value="PROTEIN-EXPORT PROTEIN SECB"/>
    <property type="match status" value="1"/>
</dbReference>
<dbReference type="Pfam" id="PF02556">
    <property type="entry name" value="SecB"/>
    <property type="match status" value="1"/>
</dbReference>
<dbReference type="PRINTS" id="PR01594">
    <property type="entry name" value="SECBCHAPRONE"/>
</dbReference>
<dbReference type="SUPFAM" id="SSF54611">
    <property type="entry name" value="SecB-like"/>
    <property type="match status" value="1"/>
</dbReference>
<evidence type="ECO:0000255" key="1">
    <source>
        <dbReference type="HAMAP-Rule" id="MF_00821"/>
    </source>
</evidence>
<gene>
    <name evidence="1" type="primary">secB</name>
    <name type="ordered locus">ACIAD3122</name>
</gene>
<feature type="chain" id="PRO_0000055341" description="Protein-export protein SecB">
    <location>
        <begin position="1"/>
        <end position="151"/>
    </location>
</feature>
<organism>
    <name type="scientific">Acinetobacter baylyi (strain ATCC 33305 / BD413 / ADP1)</name>
    <dbReference type="NCBI Taxonomy" id="62977"/>
    <lineage>
        <taxon>Bacteria</taxon>
        <taxon>Pseudomonadati</taxon>
        <taxon>Pseudomonadota</taxon>
        <taxon>Gammaproteobacteria</taxon>
        <taxon>Moraxellales</taxon>
        <taxon>Moraxellaceae</taxon>
        <taxon>Acinetobacter</taxon>
    </lineage>
</organism>
<sequence length="151" mass="16991">MSEEQQTQPQLALERLYTKDISFEVPGPQVFTKQWQPELNINLSSSAEKIDPTHFEVSLKVVVQANNEGETAFIVDVTQSGIFLIDNIEEDRLPYILGAYCPNILFPFLREAVNDMVTKGSFPQLLLTPINFDAEFEANLERAQTAVEGQA</sequence>